<organism>
    <name type="scientific">Brucella suis (strain ATCC 23445 / NCTC 10510)</name>
    <dbReference type="NCBI Taxonomy" id="470137"/>
    <lineage>
        <taxon>Bacteria</taxon>
        <taxon>Pseudomonadati</taxon>
        <taxon>Pseudomonadota</taxon>
        <taxon>Alphaproteobacteria</taxon>
        <taxon>Hyphomicrobiales</taxon>
        <taxon>Brucellaceae</taxon>
        <taxon>Brucella/Ochrobactrum group</taxon>
        <taxon>Brucella</taxon>
    </lineage>
</organism>
<protein>
    <recommendedName>
        <fullName evidence="1">Flagellar L-ring protein</fullName>
    </recommendedName>
    <alternativeName>
        <fullName evidence="1">Basal body L-ring protein</fullName>
    </alternativeName>
</protein>
<evidence type="ECO:0000255" key="1">
    <source>
        <dbReference type="HAMAP-Rule" id="MF_00415"/>
    </source>
</evidence>
<proteinExistence type="inferred from homology"/>
<reference key="1">
    <citation type="submission" date="2007-12" db="EMBL/GenBank/DDBJ databases">
        <title>Brucella suis ATCC 23445 whole genome shotgun sequencing project.</title>
        <authorList>
            <person name="Setubal J.C."/>
            <person name="Bowns C."/>
            <person name="Boyle S."/>
            <person name="Crasta O.R."/>
            <person name="Czar M.J."/>
            <person name="Dharmanolla C."/>
            <person name="Gillespie J.J."/>
            <person name="Kenyon R.W."/>
            <person name="Lu J."/>
            <person name="Mane S."/>
            <person name="Mohapatra S."/>
            <person name="Nagrani S."/>
            <person name="Purkayastha A."/>
            <person name="Rajasimha H.K."/>
            <person name="Shallom J.M."/>
            <person name="Shallom S."/>
            <person name="Shukla M."/>
            <person name="Snyder E.E."/>
            <person name="Sobral B.W."/>
            <person name="Wattam A.R."/>
            <person name="Will R."/>
            <person name="Williams K."/>
            <person name="Yoo H."/>
            <person name="Bruce D."/>
            <person name="Detter C."/>
            <person name="Munk C."/>
            <person name="Brettin T.S."/>
        </authorList>
    </citation>
    <scope>NUCLEOTIDE SEQUENCE [LARGE SCALE GENOMIC DNA]</scope>
    <source>
        <strain>ATCC 23445 / NCTC 10510</strain>
    </source>
</reference>
<keyword id="KW-0975">Bacterial flagellum</keyword>
<keyword id="KW-0998">Cell outer membrane</keyword>
<keyword id="KW-0449">Lipoprotein</keyword>
<keyword id="KW-0472">Membrane</keyword>
<keyword id="KW-0564">Palmitate</keyword>
<keyword id="KW-0732">Signal</keyword>
<gene>
    <name evidence="1" type="primary">flgH</name>
    <name type="ordered locus">BSUIS_B0162</name>
</gene>
<accession>A9WXL7</accession>
<sequence length="238" mass="25471">MNKAILAVAMVLLLAGCATKPEEIGRAPDLSPVAAHLGMQNNPQFNGYPARPGKASYSLWDQRSTNFFKDPRAATPGDVLTVIISINDRANLDNKTDRERVSKGIYGGGGSFATSSITGAAAGGDMDASVNTHSDSKSKGKGTIERSEDIRLQIAAIVTDTLPNGNLIIRGSQEVRVNNELRVLNVAGVVRPRDISGNNTISYDKIAEARISYGGRGRLSEIQQPPYGQQILDQFSPF</sequence>
<feature type="signal peptide" evidence="1">
    <location>
        <begin position="1"/>
        <end position="16"/>
    </location>
</feature>
<feature type="chain" id="PRO_1000080509" description="Flagellar L-ring protein">
    <location>
        <begin position="17"/>
        <end position="238"/>
    </location>
</feature>
<feature type="lipid moiety-binding region" description="N-palmitoyl cysteine" evidence="1">
    <location>
        <position position="17"/>
    </location>
</feature>
<feature type="lipid moiety-binding region" description="S-diacylglycerol cysteine" evidence="1">
    <location>
        <position position="17"/>
    </location>
</feature>
<name>FLGH_BRUSI</name>
<dbReference type="EMBL" id="CP000912">
    <property type="protein sequence ID" value="ABY39183.1"/>
    <property type="molecule type" value="Genomic_DNA"/>
</dbReference>
<dbReference type="RefSeq" id="WP_006073295.1">
    <property type="nucleotide sequence ID" value="NC_010167.1"/>
</dbReference>
<dbReference type="SMR" id="A9WXL7"/>
<dbReference type="KEGG" id="bmt:BSUIS_B0162"/>
<dbReference type="HOGENOM" id="CLU_069313_1_2_5"/>
<dbReference type="Proteomes" id="UP000008545">
    <property type="component" value="Chromosome II"/>
</dbReference>
<dbReference type="GO" id="GO:0009427">
    <property type="term" value="C:bacterial-type flagellum basal body, distal rod, L ring"/>
    <property type="evidence" value="ECO:0007669"/>
    <property type="project" value="InterPro"/>
</dbReference>
<dbReference type="GO" id="GO:0009279">
    <property type="term" value="C:cell outer membrane"/>
    <property type="evidence" value="ECO:0007669"/>
    <property type="project" value="UniProtKB-SubCell"/>
</dbReference>
<dbReference type="GO" id="GO:0003774">
    <property type="term" value="F:cytoskeletal motor activity"/>
    <property type="evidence" value="ECO:0007669"/>
    <property type="project" value="InterPro"/>
</dbReference>
<dbReference type="GO" id="GO:0071973">
    <property type="term" value="P:bacterial-type flagellum-dependent cell motility"/>
    <property type="evidence" value="ECO:0007669"/>
    <property type="project" value="InterPro"/>
</dbReference>
<dbReference type="HAMAP" id="MF_00415">
    <property type="entry name" value="FlgH"/>
    <property type="match status" value="1"/>
</dbReference>
<dbReference type="InterPro" id="IPR000527">
    <property type="entry name" value="Flag_Lring"/>
</dbReference>
<dbReference type="NCBIfam" id="NF001305">
    <property type="entry name" value="PRK00249.1-5"/>
    <property type="match status" value="1"/>
</dbReference>
<dbReference type="PANTHER" id="PTHR34933">
    <property type="entry name" value="FLAGELLAR L-RING PROTEIN"/>
    <property type="match status" value="1"/>
</dbReference>
<dbReference type="PANTHER" id="PTHR34933:SF1">
    <property type="entry name" value="FLAGELLAR L-RING PROTEIN"/>
    <property type="match status" value="1"/>
</dbReference>
<dbReference type="Pfam" id="PF02107">
    <property type="entry name" value="FlgH"/>
    <property type="match status" value="1"/>
</dbReference>
<dbReference type="PRINTS" id="PR01008">
    <property type="entry name" value="FLGLRINGFLGH"/>
</dbReference>
<dbReference type="PROSITE" id="PS51257">
    <property type="entry name" value="PROKAR_LIPOPROTEIN"/>
    <property type="match status" value="1"/>
</dbReference>
<comment type="function">
    <text evidence="1">Assembles around the rod to form the L-ring and probably protects the motor/basal body from shearing forces during rotation.</text>
</comment>
<comment type="subunit">
    <text evidence="1">The basal body constitutes a major portion of the flagellar organelle and consists of four rings (L,P,S, and M) mounted on a central rod.</text>
</comment>
<comment type="subcellular location">
    <subcellularLocation>
        <location evidence="1">Cell outer membrane</location>
        <topology evidence="1">Lipid-anchor</topology>
    </subcellularLocation>
    <subcellularLocation>
        <location evidence="1">Bacterial flagellum basal body</location>
    </subcellularLocation>
</comment>
<comment type="similarity">
    <text evidence="1">Belongs to the FlgH family.</text>
</comment>